<feature type="chain" id="PRO_0000175193" description="Ferrochelatase">
    <location>
        <begin position="1"/>
        <end position="342"/>
    </location>
</feature>
<feature type="binding site" evidence="1">
    <location>
        <position position="188"/>
    </location>
    <ligand>
        <name>Fe cation</name>
        <dbReference type="ChEBI" id="CHEBI:24875"/>
    </ligand>
</feature>
<feature type="binding site" evidence="1">
    <location>
        <position position="268"/>
    </location>
    <ligand>
        <name>Fe cation</name>
        <dbReference type="ChEBI" id="CHEBI:24875"/>
    </ligand>
</feature>
<comment type="function">
    <text evidence="1">Catalyzes the ferrous insertion into protoporphyrin IX.</text>
</comment>
<comment type="catalytic activity">
    <reaction evidence="1">
        <text>heme b + 2 H(+) = protoporphyrin IX + Fe(2+)</text>
        <dbReference type="Rhea" id="RHEA:22584"/>
        <dbReference type="ChEBI" id="CHEBI:15378"/>
        <dbReference type="ChEBI" id="CHEBI:29033"/>
        <dbReference type="ChEBI" id="CHEBI:57306"/>
        <dbReference type="ChEBI" id="CHEBI:60344"/>
        <dbReference type="EC" id="4.98.1.1"/>
    </reaction>
</comment>
<comment type="pathway">
    <text evidence="1">Porphyrin-containing compound metabolism; protoheme biosynthesis; protoheme from protoporphyrin-IX: step 1/1.</text>
</comment>
<comment type="subcellular location">
    <subcellularLocation>
        <location evidence="1">Cytoplasm</location>
    </subcellularLocation>
</comment>
<comment type="similarity">
    <text evidence="1 2">Belongs to the ferrochelatase family.</text>
</comment>
<comment type="sequence caution" evidence="2">
    <conflict type="erroneous initiation">
        <sequence resource="EMBL-CDS" id="AAL03911"/>
    </conflict>
</comment>
<keyword id="KW-0963">Cytoplasm</keyword>
<keyword id="KW-0350">Heme biosynthesis</keyword>
<keyword id="KW-0408">Iron</keyword>
<keyword id="KW-0456">Lyase</keyword>
<keyword id="KW-0479">Metal-binding</keyword>
<keyword id="KW-0627">Porphyrin biosynthesis</keyword>
<accession>Q92FV4</accession>
<name>HEMH_RICCN</name>
<dbReference type="EC" id="4.98.1.1" evidence="1"/>
<dbReference type="EMBL" id="AE006914">
    <property type="protein sequence ID" value="AAL03911.1"/>
    <property type="status" value="ALT_INIT"/>
    <property type="molecule type" value="Genomic_DNA"/>
</dbReference>
<dbReference type="PIR" id="E97871">
    <property type="entry name" value="E97871"/>
</dbReference>
<dbReference type="RefSeq" id="WP_010977923.1">
    <property type="nucleotide sequence ID" value="NC_003103.1"/>
</dbReference>
<dbReference type="SMR" id="Q92FV4"/>
<dbReference type="GeneID" id="927631"/>
<dbReference type="KEGG" id="rco:RC1373"/>
<dbReference type="PATRIC" id="fig|272944.4.peg.1578"/>
<dbReference type="HOGENOM" id="CLU_018884_4_1_5"/>
<dbReference type="UniPathway" id="UPA00252">
    <property type="reaction ID" value="UER00325"/>
</dbReference>
<dbReference type="Proteomes" id="UP000000816">
    <property type="component" value="Chromosome"/>
</dbReference>
<dbReference type="GO" id="GO:0005737">
    <property type="term" value="C:cytoplasm"/>
    <property type="evidence" value="ECO:0007669"/>
    <property type="project" value="UniProtKB-SubCell"/>
</dbReference>
<dbReference type="GO" id="GO:0004325">
    <property type="term" value="F:ferrochelatase activity"/>
    <property type="evidence" value="ECO:0007669"/>
    <property type="project" value="UniProtKB-UniRule"/>
</dbReference>
<dbReference type="GO" id="GO:0046872">
    <property type="term" value="F:metal ion binding"/>
    <property type="evidence" value="ECO:0007669"/>
    <property type="project" value="UniProtKB-KW"/>
</dbReference>
<dbReference type="GO" id="GO:0006783">
    <property type="term" value="P:heme biosynthetic process"/>
    <property type="evidence" value="ECO:0007669"/>
    <property type="project" value="UniProtKB-UniRule"/>
</dbReference>
<dbReference type="CDD" id="cd00419">
    <property type="entry name" value="Ferrochelatase_C"/>
    <property type="match status" value="1"/>
</dbReference>
<dbReference type="CDD" id="cd03411">
    <property type="entry name" value="Ferrochelatase_N"/>
    <property type="match status" value="1"/>
</dbReference>
<dbReference type="Gene3D" id="3.40.50.1400">
    <property type="match status" value="2"/>
</dbReference>
<dbReference type="HAMAP" id="MF_00323">
    <property type="entry name" value="Ferrochelatase"/>
    <property type="match status" value="1"/>
</dbReference>
<dbReference type="InterPro" id="IPR001015">
    <property type="entry name" value="Ferrochelatase"/>
</dbReference>
<dbReference type="InterPro" id="IPR019772">
    <property type="entry name" value="Ferrochelatase_AS"/>
</dbReference>
<dbReference type="InterPro" id="IPR033644">
    <property type="entry name" value="Ferrochelatase_C"/>
</dbReference>
<dbReference type="InterPro" id="IPR033659">
    <property type="entry name" value="Ferrochelatase_N"/>
</dbReference>
<dbReference type="NCBIfam" id="TIGR00109">
    <property type="entry name" value="hemH"/>
    <property type="match status" value="1"/>
</dbReference>
<dbReference type="PANTHER" id="PTHR11108">
    <property type="entry name" value="FERROCHELATASE"/>
    <property type="match status" value="1"/>
</dbReference>
<dbReference type="PANTHER" id="PTHR11108:SF1">
    <property type="entry name" value="FERROCHELATASE, MITOCHONDRIAL"/>
    <property type="match status" value="1"/>
</dbReference>
<dbReference type="Pfam" id="PF00762">
    <property type="entry name" value="Ferrochelatase"/>
    <property type="match status" value="1"/>
</dbReference>
<dbReference type="SUPFAM" id="SSF53800">
    <property type="entry name" value="Chelatase"/>
    <property type="match status" value="1"/>
</dbReference>
<dbReference type="PROSITE" id="PS00534">
    <property type="entry name" value="FERROCHELATASE"/>
    <property type="match status" value="1"/>
</dbReference>
<proteinExistence type="inferred from homology"/>
<reference key="1">
    <citation type="journal article" date="2001" name="Science">
        <title>Mechanisms of evolution in Rickettsia conorii and R. prowazekii.</title>
        <authorList>
            <person name="Ogata H."/>
            <person name="Audic S."/>
            <person name="Renesto-Audiffren P."/>
            <person name="Fournier P.-E."/>
            <person name="Barbe V."/>
            <person name="Samson D."/>
            <person name="Roux V."/>
            <person name="Cossart P."/>
            <person name="Weissenbach J."/>
            <person name="Claverie J.-M."/>
            <person name="Raoult D."/>
        </authorList>
    </citation>
    <scope>NUCLEOTIDE SEQUENCE [LARGE SCALE GENOMIC DNA]</scope>
    <source>
        <strain>ATCC VR-613 / Malish 7</strain>
    </source>
</reference>
<gene>
    <name evidence="1" type="primary">hemH</name>
    <name type="ordered locus">RC1373</name>
</gene>
<organism>
    <name type="scientific">Rickettsia conorii (strain ATCC VR-613 / Malish 7)</name>
    <dbReference type="NCBI Taxonomy" id="272944"/>
    <lineage>
        <taxon>Bacteria</taxon>
        <taxon>Pseudomonadati</taxon>
        <taxon>Pseudomonadota</taxon>
        <taxon>Alphaproteobacteria</taxon>
        <taxon>Rickettsiales</taxon>
        <taxon>Rickettsiaceae</taxon>
        <taxon>Rickettsieae</taxon>
        <taxon>Rickettsia</taxon>
        <taxon>spotted fever group</taxon>
    </lineage>
</organism>
<evidence type="ECO:0000255" key="1">
    <source>
        <dbReference type="HAMAP-Rule" id="MF_00323"/>
    </source>
</evidence>
<evidence type="ECO:0000305" key="2"/>
<sequence length="342" mass="39238">MKKRIAIVLFNLGGPKNLKSVKPFLFNLFYDKAIINLPNPLRYIIAKIISITREKKSQKIYSLIGGKSSLLQETEEQKLALTEKLKQLIKEDFAIFINMRYSAPFAKEVIGQIKKYNPSEIILLPLYSQFSSTTTGSSVKNFLQNLDIDIPIKTICCYPLEKDFIKAHVSLIKEKLYDKNFRILFSAHGLPEKIIKAGDPYSFQIKETVQAIVKELNIKDLDYKITYQSRVGPIEWLKPNTEDEIELAGKLKKDIIIVPISFVSEHVETLVELDIEYKLIADKYEIQYIRIPTLGTNKIFINSLTNILLRFINKVDTNLVMSSSSTRICPNEFTKCLCKLTS</sequence>
<protein>
    <recommendedName>
        <fullName evidence="1">Ferrochelatase</fullName>
        <ecNumber evidence="1">4.98.1.1</ecNumber>
    </recommendedName>
    <alternativeName>
        <fullName evidence="1">Heme synthase</fullName>
    </alternativeName>
    <alternativeName>
        <fullName evidence="1">Protoheme ferro-lyase</fullName>
    </alternativeName>
</protein>